<organism>
    <name type="scientific">Invertebrate iridescent virus 6</name>
    <name type="common">IIV-6</name>
    <name type="synonym">Chilo iridescent virus</name>
    <dbReference type="NCBI Taxonomy" id="176652"/>
    <lineage>
        <taxon>Viruses</taxon>
        <taxon>Varidnaviria</taxon>
        <taxon>Bamfordvirae</taxon>
        <taxon>Nucleocytoviricota</taxon>
        <taxon>Megaviricetes</taxon>
        <taxon>Pimascovirales</taxon>
        <taxon>Iridoviridae</taxon>
        <taxon>Betairidovirinae</taxon>
        <taxon>Iridovirus</taxon>
    </lineage>
</organism>
<sequence length="615" mass="70152">MDETQQLLYKFKNLTISENEKLKLKEKADHFYFNTEKEILTDNEYDILAEQLQSTNVGCSPLISKTDLPLWMGSLDKVYNDKELNLWIKKVASDKYIIQCKLDGVSCLIINKDNKLKAYTRGNGKVGTDISHLIKYFIKDKCLPNNIALRCEIIIKKETFNQKYKHAFSNPRSFVSGVVNRKQENIVISELNDLCLIAYELINFPVNEYQKNILTQIEIIEQLNFIQFVNFKTISNEFLTQKALSNLFKEMKNNSLFEMDGLVILANTPYIRVTEGNPKHSIAFKVRGDNVKEAKVTFIEWNVGKTGVFTPKVHIVPTEINGTTVSCFTGFNANYLIEKGIGEGAIILVTRAGDAIPQIIGVKQTGVLTFPKDYEWKGDCRIVEKIESKERIIKQILHFVESVDIPYIKEATINKLYNNGCTSIELFLKLTQKDLLLFGPKLSSTIYNSIQKSFEAPIEKFLSGYNAFGDYIGEKKILLLLQKYPNLFELENLDAIDLVSIEGIGSKTATQIKQHFINAKLIYNNIIQNKLFKGVLHTPSKQNTVELFKVCVSGTRDPLFIQELKNRGFVLSDNITKKVKVLIVKNSNEETTKVKKANSVGITILTLEDFKQKYF</sequence>
<organismHost>
    <name type="scientific">Acheta domesticus</name>
    <name type="common">House cricket</name>
    <dbReference type="NCBI Taxonomy" id="6997"/>
</organismHost>
<organismHost>
    <name type="scientific">Chilo suppressalis</name>
    <name type="common">Asiatic rice borer moth</name>
    <dbReference type="NCBI Taxonomy" id="168631"/>
</organismHost>
<organismHost>
    <name type="scientific">Gryllus bimaculatus</name>
    <name type="common">Two-spotted cricket</name>
    <dbReference type="NCBI Taxonomy" id="6999"/>
</organismHost>
<organismHost>
    <name type="scientific">Gryllus campestris</name>
    <dbReference type="NCBI Taxonomy" id="58607"/>
</organismHost>
<organismHost>
    <name type="scientific">Spodoptera frugiperda</name>
    <name type="common">Fall armyworm</name>
    <dbReference type="NCBI Taxonomy" id="7108"/>
</organismHost>
<feature type="chain" id="PRO_0000376962" description="Putative DNA ligase 205R">
    <location>
        <begin position="1"/>
        <end position="615"/>
    </location>
</feature>
<feature type="active site" description="N6-AMP-lysine intermediate" evidence="1">
    <location>
        <position position="101"/>
    </location>
</feature>
<accession>Q91FW5</accession>
<protein>
    <recommendedName>
        <fullName>Putative DNA ligase 205R</fullName>
        <ecNumber>6.5.1.2</ecNumber>
    </recommendedName>
</protein>
<dbReference type="EC" id="6.5.1.2"/>
<dbReference type="EMBL" id="AF303741">
    <property type="protein sequence ID" value="AAK82067.1"/>
    <property type="molecule type" value="Genomic_DNA"/>
</dbReference>
<dbReference type="RefSeq" id="NP_149668.1">
    <property type="nucleotide sequence ID" value="NC_003038.1"/>
</dbReference>
<dbReference type="SMR" id="Q91FW5"/>
<dbReference type="KEGG" id="vg:1733308"/>
<dbReference type="OrthoDB" id="2744at10239"/>
<dbReference type="Proteomes" id="UP000001359">
    <property type="component" value="Genome"/>
</dbReference>
<dbReference type="GO" id="GO:0003911">
    <property type="term" value="F:DNA ligase (NAD+) activity"/>
    <property type="evidence" value="ECO:0007669"/>
    <property type="project" value="UniProtKB-EC"/>
</dbReference>
<dbReference type="GO" id="GO:0006281">
    <property type="term" value="P:DNA repair"/>
    <property type="evidence" value="ECO:0007669"/>
    <property type="project" value="InterPro"/>
</dbReference>
<dbReference type="GO" id="GO:0006260">
    <property type="term" value="P:DNA replication"/>
    <property type="evidence" value="ECO:0007669"/>
    <property type="project" value="UniProtKB-KW"/>
</dbReference>
<dbReference type="Gene3D" id="1.10.150.20">
    <property type="entry name" value="5' to 3' exonuclease, C-terminal subdomain"/>
    <property type="match status" value="1"/>
</dbReference>
<dbReference type="Gene3D" id="3.40.50.10190">
    <property type="entry name" value="BRCT domain"/>
    <property type="match status" value="1"/>
</dbReference>
<dbReference type="Gene3D" id="3.30.470.30">
    <property type="entry name" value="DNA ligase/mRNA capping enzyme"/>
    <property type="match status" value="1"/>
</dbReference>
<dbReference type="Gene3D" id="2.40.50.140">
    <property type="entry name" value="Nucleic acid-binding proteins"/>
    <property type="match status" value="1"/>
</dbReference>
<dbReference type="InterPro" id="IPR036420">
    <property type="entry name" value="BRCT_dom_sf"/>
</dbReference>
<dbReference type="InterPro" id="IPR001679">
    <property type="entry name" value="DNA_ligase"/>
</dbReference>
<dbReference type="InterPro" id="IPR013839">
    <property type="entry name" value="DNAligase_adenylation"/>
</dbReference>
<dbReference type="InterPro" id="IPR013840">
    <property type="entry name" value="DNAligase_N"/>
</dbReference>
<dbReference type="InterPro" id="IPR012340">
    <property type="entry name" value="NA-bd_OB-fold"/>
</dbReference>
<dbReference type="InterPro" id="IPR004150">
    <property type="entry name" value="NAD_DNA_ligase_OB"/>
</dbReference>
<dbReference type="InterPro" id="IPR010994">
    <property type="entry name" value="RuvA_2-like"/>
</dbReference>
<dbReference type="Pfam" id="PF01653">
    <property type="entry name" value="DNA_ligase_aden"/>
    <property type="match status" value="1"/>
</dbReference>
<dbReference type="Pfam" id="PF03120">
    <property type="entry name" value="DNA_ligase_OB"/>
    <property type="match status" value="1"/>
</dbReference>
<dbReference type="PIRSF" id="PIRSF001604">
    <property type="entry name" value="LigA"/>
    <property type="match status" value="1"/>
</dbReference>
<dbReference type="SMART" id="SM00532">
    <property type="entry name" value="LIGANc"/>
    <property type="match status" value="1"/>
</dbReference>
<dbReference type="SUPFAM" id="SSF56091">
    <property type="entry name" value="DNA ligase/mRNA capping enzyme, catalytic domain"/>
    <property type="match status" value="1"/>
</dbReference>
<dbReference type="SUPFAM" id="SSF50249">
    <property type="entry name" value="Nucleic acid-binding proteins"/>
    <property type="match status" value="1"/>
</dbReference>
<dbReference type="SUPFAM" id="SSF47781">
    <property type="entry name" value="RuvA domain 2-like"/>
    <property type="match status" value="1"/>
</dbReference>
<comment type="function">
    <text evidence="1">Catalyzes the formation of phosphodiester linkages between 5'-phosphoryl and 3'-hydroxyl groups in double-stranded DNA using NAD as a coenzyme and as the energy source for the reaction.</text>
</comment>
<comment type="catalytic activity">
    <reaction>
        <text>NAD(+) + (deoxyribonucleotide)n-3'-hydroxyl + 5'-phospho-(deoxyribonucleotide)m = (deoxyribonucleotide)n+m + AMP + beta-nicotinamide D-nucleotide.</text>
        <dbReference type="EC" id="6.5.1.2"/>
    </reaction>
</comment>
<comment type="similarity">
    <text evidence="2">Belongs to the NAD-dependent DNA ligase family.</text>
</comment>
<name>VF205_IIV6</name>
<evidence type="ECO:0000250" key="1"/>
<evidence type="ECO:0000305" key="2"/>
<reference key="1">
    <citation type="journal article" date="2001" name="Virology">
        <title>Analysis of the first complete DNA sequence of an invertebrate iridovirus: coding strategy of the genome of Chilo iridescent virus.</title>
        <authorList>
            <person name="Jakob N.J."/>
            <person name="Mueller K."/>
            <person name="Bahr U."/>
            <person name="Darai G."/>
        </authorList>
    </citation>
    <scope>NUCLEOTIDE SEQUENCE [LARGE SCALE GENOMIC DNA]</scope>
</reference>
<reference key="2">
    <citation type="journal article" date="2007" name="Virol. J.">
        <title>Comparative genomic analysis of the family Iridoviridae: re-annotating and defining the core set of iridovirus genes.</title>
        <authorList>
            <person name="Eaton H.E."/>
            <person name="Metcalf J."/>
            <person name="Penny E."/>
            <person name="Tcherepanov V."/>
            <person name="Upton C."/>
            <person name="Brunetti C.R."/>
        </authorList>
    </citation>
    <scope>GENOME REANNOTATION</scope>
</reference>
<proteinExistence type="inferred from homology"/>
<keyword id="KW-0235">DNA replication</keyword>
<keyword id="KW-0436">Ligase</keyword>
<keyword id="KW-0520">NAD</keyword>
<keyword id="KW-1185">Reference proteome</keyword>
<gene>
    <name type="ORF">IIV6-205R</name>
</gene>